<organism>
    <name type="scientific">Saccharomyces cerevisiae (strain ATCC 204508 / S288c)</name>
    <name type="common">Baker's yeast</name>
    <dbReference type="NCBI Taxonomy" id="559292"/>
    <lineage>
        <taxon>Eukaryota</taxon>
        <taxon>Fungi</taxon>
        <taxon>Dikarya</taxon>
        <taxon>Ascomycota</taxon>
        <taxon>Saccharomycotina</taxon>
        <taxon>Saccharomycetes</taxon>
        <taxon>Saccharomycetales</taxon>
        <taxon>Saccharomycetaceae</taxon>
        <taxon>Saccharomyces</taxon>
    </lineage>
</organism>
<keyword id="KW-0002">3D-structure</keyword>
<keyword id="KW-0175">Coiled coil</keyword>
<keyword id="KW-0963">Cytoplasm</keyword>
<keyword id="KW-0539">Nucleus</keyword>
<keyword id="KW-1185">Reference proteome</keyword>
<feature type="chain" id="PRO_0000245386" description="Protein LSO2">
    <location>
        <begin position="1"/>
        <end position="92"/>
    </location>
</feature>
<feature type="region of interest" description="Disordered" evidence="2">
    <location>
        <begin position="1"/>
        <end position="92"/>
    </location>
</feature>
<feature type="coiled-coil region" evidence="1">
    <location>
        <begin position="17"/>
        <end position="80"/>
    </location>
</feature>
<feature type="compositionally biased region" description="Basic and acidic residues" evidence="2">
    <location>
        <begin position="1"/>
        <end position="10"/>
    </location>
</feature>
<feature type="compositionally biased region" description="Basic and acidic residues" evidence="2">
    <location>
        <begin position="38"/>
        <end position="72"/>
    </location>
</feature>
<gene>
    <name evidence="6" type="primary">LSO2</name>
    <name evidence="8" type="ordered locus">YGR169C-A</name>
</gene>
<dbReference type="EMBL" id="Z72954">
    <property type="status" value="NOT_ANNOTATED_CDS"/>
    <property type="molecule type" value="Genomic_DNA"/>
</dbReference>
<dbReference type="EMBL" id="BK006941">
    <property type="protein sequence ID" value="DAA08264.1"/>
    <property type="molecule type" value="Genomic_DNA"/>
</dbReference>
<dbReference type="RefSeq" id="NP_878080.3">
    <property type="nucleotide sequence ID" value="NM_001184531.3"/>
</dbReference>
<dbReference type="PDB" id="6Z6J">
    <property type="method" value="EM"/>
    <property type="resolution" value="3.40 A"/>
    <property type="chains" value="C5=1-92"/>
</dbReference>
<dbReference type="PDB" id="6Z6K">
    <property type="method" value="EM"/>
    <property type="resolution" value="3.40 A"/>
    <property type="chains" value="C5=2-92"/>
</dbReference>
<dbReference type="PDB" id="8T3A">
    <property type="method" value="EM"/>
    <property type="resolution" value="2.86 A"/>
    <property type="chains" value="C5=1-92"/>
</dbReference>
<dbReference type="PDBsum" id="6Z6J"/>
<dbReference type="PDBsum" id="6Z6K"/>
<dbReference type="PDBsum" id="8T3A"/>
<dbReference type="EMDB" id="EMD-11096"/>
<dbReference type="EMDB" id="EMD-11097"/>
<dbReference type="SMR" id="Q3E772"/>
<dbReference type="BioGRID" id="37002">
    <property type="interactions" value="55"/>
</dbReference>
<dbReference type="FunCoup" id="Q3E772">
    <property type="interactions" value="11"/>
</dbReference>
<dbReference type="IntAct" id="Q3E772">
    <property type="interactions" value="2"/>
</dbReference>
<dbReference type="MINT" id="Q3E772"/>
<dbReference type="STRING" id="4932.YGR169C-A"/>
<dbReference type="iPTMnet" id="Q3E772"/>
<dbReference type="PaxDb" id="4932-YGR169C-A"/>
<dbReference type="PeptideAtlas" id="Q3E772"/>
<dbReference type="EnsemblFungi" id="YGR169C-A_mRNA">
    <property type="protein sequence ID" value="YGR169C-A"/>
    <property type="gene ID" value="YGR169C-A"/>
</dbReference>
<dbReference type="GeneID" id="1466460"/>
<dbReference type="KEGG" id="sce:YGR169C-A"/>
<dbReference type="AGR" id="SGD:S000028521"/>
<dbReference type="SGD" id="S000028521">
    <property type="gene designation" value="LSO2"/>
</dbReference>
<dbReference type="VEuPathDB" id="FungiDB:YGR169C-A"/>
<dbReference type="eggNOG" id="KOG3223">
    <property type="taxonomic scope" value="Eukaryota"/>
</dbReference>
<dbReference type="GeneTree" id="ENSGT00940000176679"/>
<dbReference type="HOGENOM" id="CLU_186256_0_0_1"/>
<dbReference type="InParanoid" id="Q3E772"/>
<dbReference type="OMA" id="KWDQGSR"/>
<dbReference type="OrthoDB" id="4069860at2759"/>
<dbReference type="BioCyc" id="YEAST:G3O-31009-MONOMER"/>
<dbReference type="BioGRID-ORCS" id="1466460">
    <property type="hits" value="0 hits in 10 CRISPR screens"/>
</dbReference>
<dbReference type="PRO" id="PR:Q3E772"/>
<dbReference type="Proteomes" id="UP000002311">
    <property type="component" value="Chromosome VII"/>
</dbReference>
<dbReference type="RNAct" id="Q3E772">
    <property type="molecule type" value="protein"/>
</dbReference>
<dbReference type="GO" id="GO:0005737">
    <property type="term" value="C:cytoplasm"/>
    <property type="evidence" value="ECO:0000314"/>
    <property type="project" value="SGD"/>
</dbReference>
<dbReference type="GO" id="GO:0005634">
    <property type="term" value="C:nucleus"/>
    <property type="evidence" value="ECO:0000314"/>
    <property type="project" value="SGD"/>
</dbReference>
<dbReference type="GO" id="GO:0043022">
    <property type="term" value="F:ribosome binding"/>
    <property type="evidence" value="ECO:0000314"/>
    <property type="project" value="UniProtKB"/>
</dbReference>
<dbReference type="GO" id="GO:0030371">
    <property type="term" value="F:translation repressor activity"/>
    <property type="evidence" value="ECO:0000314"/>
    <property type="project" value="UniProtKB"/>
</dbReference>
<dbReference type="GO" id="GO:0031670">
    <property type="term" value="P:cellular response to nutrient"/>
    <property type="evidence" value="ECO:0000315"/>
    <property type="project" value="SGD"/>
</dbReference>
<dbReference type="GO" id="GO:0002182">
    <property type="term" value="P:cytoplasmic translational elongation"/>
    <property type="evidence" value="ECO:0000315"/>
    <property type="project" value="SGD"/>
</dbReference>
<dbReference type="GO" id="GO:0006879">
    <property type="term" value="P:intracellular iron ion homeostasis"/>
    <property type="evidence" value="ECO:0000315"/>
    <property type="project" value="SGD"/>
</dbReference>
<dbReference type="GO" id="GO:0141014">
    <property type="term" value="P:ribosome hibernation"/>
    <property type="evidence" value="ECO:0000314"/>
    <property type="project" value="UniProtKB"/>
</dbReference>
<dbReference type="InterPro" id="IPR054413">
    <property type="entry name" value="LSO1/2"/>
</dbReference>
<dbReference type="Pfam" id="PF22048">
    <property type="entry name" value="LSO1_2-like"/>
    <property type="match status" value="1"/>
</dbReference>
<name>LSO2_YEAST</name>
<reference key="1">
    <citation type="journal article" date="1997" name="Nature">
        <title>The nucleotide sequence of Saccharomyces cerevisiae chromosome VII.</title>
        <authorList>
            <person name="Tettelin H."/>
            <person name="Agostoni-Carbone M.L."/>
            <person name="Albermann K."/>
            <person name="Albers M."/>
            <person name="Arroyo J."/>
            <person name="Backes U."/>
            <person name="Barreiros T."/>
            <person name="Bertani I."/>
            <person name="Bjourson A.J."/>
            <person name="Brueckner M."/>
            <person name="Bruschi C.V."/>
            <person name="Carignani G."/>
            <person name="Castagnoli L."/>
            <person name="Cerdan E."/>
            <person name="Clemente M.L."/>
            <person name="Coblenz A."/>
            <person name="Coglievina M."/>
            <person name="Coissac E."/>
            <person name="Defoor E."/>
            <person name="Del Bino S."/>
            <person name="Delius H."/>
            <person name="Delneri D."/>
            <person name="de Wergifosse P."/>
            <person name="Dujon B."/>
            <person name="Durand P."/>
            <person name="Entian K.-D."/>
            <person name="Eraso P."/>
            <person name="Escribano V."/>
            <person name="Fabiani L."/>
            <person name="Fartmann B."/>
            <person name="Feroli F."/>
            <person name="Feuermann M."/>
            <person name="Frontali L."/>
            <person name="Garcia-Gonzalez M."/>
            <person name="Garcia-Saez M.I."/>
            <person name="Goffeau A."/>
            <person name="Guerreiro P."/>
            <person name="Hani J."/>
            <person name="Hansen M."/>
            <person name="Hebling U."/>
            <person name="Hernandez K."/>
            <person name="Heumann K."/>
            <person name="Hilger F."/>
            <person name="Hofmann B."/>
            <person name="Indge K.J."/>
            <person name="James C.M."/>
            <person name="Klima R."/>
            <person name="Koetter P."/>
            <person name="Kramer B."/>
            <person name="Kramer W."/>
            <person name="Lauquin G."/>
            <person name="Leuther H."/>
            <person name="Louis E.J."/>
            <person name="Maillier E."/>
            <person name="Marconi A."/>
            <person name="Martegani E."/>
            <person name="Mazon M.J."/>
            <person name="Mazzoni C."/>
            <person name="McReynolds A.D.K."/>
            <person name="Melchioretto P."/>
            <person name="Mewes H.-W."/>
            <person name="Minenkova O."/>
            <person name="Mueller-Auer S."/>
            <person name="Nawrocki A."/>
            <person name="Netter P."/>
            <person name="Neu R."/>
            <person name="Nombela C."/>
            <person name="Oliver S.G."/>
            <person name="Panzeri L."/>
            <person name="Paoluzi S."/>
            <person name="Plevani P."/>
            <person name="Portetelle D."/>
            <person name="Portillo F."/>
            <person name="Potier S."/>
            <person name="Purnelle B."/>
            <person name="Rieger M."/>
            <person name="Riles L."/>
            <person name="Rinaldi T."/>
            <person name="Robben J."/>
            <person name="Rodrigues-Pousada C."/>
            <person name="Rodriguez-Belmonte E."/>
            <person name="Rodriguez-Torres A.M."/>
            <person name="Rose M."/>
            <person name="Ruzzi M."/>
            <person name="Saliola M."/>
            <person name="Sanchez-Perez M."/>
            <person name="Schaefer B."/>
            <person name="Schaefer M."/>
            <person name="Scharfe M."/>
            <person name="Schmidheini T."/>
            <person name="Schreer A."/>
            <person name="Skala J."/>
            <person name="Souciet J.-L."/>
            <person name="Steensma H.Y."/>
            <person name="Talla E."/>
            <person name="Thierry A."/>
            <person name="Vandenbol M."/>
            <person name="van der Aart Q.J.M."/>
            <person name="Van Dyck L."/>
            <person name="Vanoni M."/>
            <person name="Verhasselt P."/>
            <person name="Voet M."/>
            <person name="Volckaert G."/>
            <person name="Wambutt R."/>
            <person name="Watson M.D."/>
            <person name="Weber N."/>
            <person name="Wedler E."/>
            <person name="Wedler H."/>
            <person name="Wipfli P."/>
            <person name="Wolf K."/>
            <person name="Wright L.F."/>
            <person name="Zaccaria P."/>
            <person name="Zimmermann M."/>
            <person name="Zollner A."/>
            <person name="Kleine K."/>
        </authorList>
    </citation>
    <scope>NUCLEOTIDE SEQUENCE [LARGE SCALE GENOMIC DNA]</scope>
    <source>
        <strain>ATCC 204508 / S288c</strain>
    </source>
</reference>
<reference key="2">
    <citation type="journal article" date="2014" name="G3 (Bethesda)">
        <title>The reference genome sequence of Saccharomyces cerevisiae: Then and now.</title>
        <authorList>
            <person name="Engel S.R."/>
            <person name="Dietrich F.S."/>
            <person name="Fisk D.G."/>
            <person name="Binkley G."/>
            <person name="Balakrishnan R."/>
            <person name="Costanzo M.C."/>
            <person name="Dwight S.S."/>
            <person name="Hitz B.C."/>
            <person name="Karra K."/>
            <person name="Nash R.S."/>
            <person name="Weng S."/>
            <person name="Wong E.D."/>
            <person name="Lloyd P."/>
            <person name="Skrzypek M.S."/>
            <person name="Miyasato S.R."/>
            <person name="Simison M."/>
            <person name="Cherry J.M."/>
        </authorList>
    </citation>
    <scope>GENOME REANNOTATION</scope>
    <source>
        <strain>ATCC 204508 / S288c</strain>
    </source>
</reference>
<reference key="3">
    <citation type="journal article" date="2003" name="Genome Biol.">
        <title>Reinvestigation of the Saccharomyces cerevisiae genome annotation by comparison to the genome of a related fungus: Ashbya gossypii.</title>
        <authorList>
            <person name="Brachat S."/>
            <person name="Dietrich F.S."/>
            <person name="Voegeli S."/>
            <person name="Zhang Z."/>
            <person name="Stuart L."/>
            <person name="Lerch A."/>
            <person name="Gates K."/>
            <person name="Gaffney T.D."/>
            <person name="Philippsen P."/>
        </authorList>
    </citation>
    <scope>GENOME REANNOTATION</scope>
</reference>
<reference key="4">
    <citation type="journal article" date="2015" name="MicrobiologyOpen">
        <title>The late-annotated small ORF LSO1 is a target gene of the iron regulon of Saccharomyces cerevisiae.</title>
        <authorList>
            <person name="An X."/>
            <person name="Zhang C."/>
            <person name="Sclafani R.A."/>
            <person name="Seligman P."/>
            <person name="Huang M."/>
        </authorList>
    </citation>
    <scope>FUNCTION</scope>
    <scope>SUBCELLULAR LOCATION</scope>
    <scope>INDUCTION</scope>
    <scope>DISRUPTION PHENOTYPE</scope>
</reference>
<reference key="5">
    <citation type="journal article" date="2018" name="J. Proteome Res.">
        <title>Enrichment-based proteogenomics identifies microproteins, missing proteins, and novel smORFs in Saccharomyces cerevisiae.</title>
        <authorList>
            <person name="He C."/>
            <person name="Jia C."/>
            <person name="Zhang Y."/>
            <person name="Xu P."/>
        </authorList>
    </citation>
    <scope>IDENTIFICATION BY MASS SPECTROMETRY</scope>
</reference>
<reference key="6">
    <citation type="journal article" date="2018" name="PLoS Biol.">
        <title>Lso2 is a conserved ribosome-bound protein required for translational recovery in yeast.</title>
        <authorList>
            <person name="Wang Y.J."/>
            <person name="Vaidyanathan P.P."/>
            <person name="Rojas-Duran M.F."/>
            <person name="Udeshi N.D."/>
            <person name="Bartoli K.M."/>
            <person name="Carr S.A."/>
            <person name="Gilbert W.V."/>
        </authorList>
    </citation>
    <scope>FUNCTION</scope>
    <scope>DISRUPTION PHENOTYPE</scope>
</reference>
<reference evidence="9 10" key="7">
    <citation type="journal article" date="2020" name="PLoS Biol.">
        <title>Structure and function of yeast Lso2 and human CCDC124 bound to hibernating ribosomes.</title>
        <authorList>
            <person name="Wells J.N."/>
            <person name="Buschauer R."/>
            <person name="Mackens-Kiani T."/>
            <person name="Best K."/>
            <person name="Kratzat H."/>
            <person name="Berninghausen O."/>
            <person name="Becker T."/>
            <person name="Gilbert W."/>
            <person name="Cheng J."/>
            <person name="Beckmann R."/>
        </authorList>
    </citation>
    <scope>STRUCTURE BY ELECTRON MICROSCOPY (3.40 ANGSTROMS) IN COMPLEX WITH RIBOSOME</scope>
    <scope>FUNCTION</scope>
    <scope>SUBUNIT</scope>
</reference>
<proteinExistence type="evidence at protein level"/>
<protein>
    <recommendedName>
        <fullName evidence="7">Protein LSO2</fullName>
    </recommendedName>
    <alternativeName>
        <fullName evidence="6">Late-annotated small open reading frame 2</fullName>
    </alternativeName>
</protein>
<sequence length="92" mass="10495">MGKRFSESAAKKAAGLARKRDQAHAKQRAQMEQLEAEEASKWEQGSRKENAKKLEEEQKRQEKARAKKERDALLTAEEEQLGKGGKGKRKMK</sequence>
<accession>Q3E772</accession>
<accession>D6VUV3</accession>
<evidence type="ECO:0000255" key="1"/>
<evidence type="ECO:0000256" key="2">
    <source>
        <dbReference type="SAM" id="MobiDB-lite"/>
    </source>
</evidence>
<evidence type="ECO:0000269" key="3">
    <source>
    </source>
</evidence>
<evidence type="ECO:0000269" key="4">
    <source>
    </source>
</evidence>
<evidence type="ECO:0000269" key="5">
    <source>
    </source>
</evidence>
<evidence type="ECO:0000303" key="6">
    <source>
    </source>
</evidence>
<evidence type="ECO:0000305" key="7"/>
<evidence type="ECO:0000312" key="8">
    <source>
        <dbReference type="SGD" id="S000028521"/>
    </source>
</evidence>
<evidence type="ECO:0007744" key="9">
    <source>
        <dbReference type="PDB" id="6Z6J"/>
    </source>
</evidence>
<evidence type="ECO:0007744" key="10">
    <source>
        <dbReference type="PDB" id="6Z6K"/>
    </source>
</evidence>
<comment type="function">
    <text evidence="4 5">Ribosome-binding protein involved in ribosome hibernation by associating with translationally inactive ribosomes (PubMed:32687489). Required for translational recovery after starvation from stationary phase (PubMed:30208026, PubMed:32687489). May facilitate rapid translation reactivation by stabilizing the recycling-competent state of inactive ribosomes (PubMed:30208026, PubMed:32687489).</text>
</comment>
<comment type="subunit">
    <text evidence="5">Associates with translationally inactive ribosomes in the nonrotated state (PubMed:32687489). LSO2 bridges the decoding sites of the small with the GTPase activating center (GAC) of the large subunit (PubMed:32687489). This position allows accommodation of the DOM34-dependent ribosome recycling system, which splits LSO2-containing ribosomes (PubMed:32687489).</text>
</comment>
<comment type="subcellular location">
    <subcellularLocation>
        <location evidence="3">Nucleus</location>
    </subcellularLocation>
    <subcellularLocation>
        <location evidence="3">Cytoplasm</location>
    </subcellularLocation>
    <text evidence="3">Under iron-replete conditions, enriched in the nucleus. Under iron-depleted conditions, expressed in both nucleus and cytoplasm.</text>
</comment>
<comment type="induction">
    <text evidence="3">Constitutively expressed. Expression is not regulated by iron unlike the LSO1 paralog.</text>
</comment>
<comment type="disruption phenotype">
    <text evidence="3 4">Mild slow-growth phenotype in response to reduced iron levels (PubMed:26450372). Displays global translation defects during recovery from stationary phase with translation of most genes reduced more than 4-fold. Ribosomes accumulated at start codons, were depleted from stop codons, and showed codon-specific changes in occupancy (PubMed:30208026).</text>
</comment>
<comment type="similarity">
    <text evidence="7">Belongs to the CCDC124 family.</text>
</comment>